<organism>
    <name type="scientific">Escherichia coli (strain K12)</name>
    <dbReference type="NCBI Taxonomy" id="83333"/>
    <lineage>
        <taxon>Bacteria</taxon>
        <taxon>Pseudomonadati</taxon>
        <taxon>Pseudomonadota</taxon>
        <taxon>Gammaproteobacteria</taxon>
        <taxon>Enterobacterales</taxon>
        <taxon>Enterobacteriaceae</taxon>
        <taxon>Escherichia</taxon>
    </lineage>
</organism>
<sequence length="303" mass="34711">MDDCGAILHNIETKWLYDFLTLEKCRNFSQAAVSRNVSQPAFSRRIRALEQAIGVELFNRQVTPLQLSEQGKIFHSQIRHLLQQLESNLAELRGGSDYAQRKIKIAAAHSLSLGLLPSIISQMPPLFTWAIEAIDVDEAVDKLREGQSDCIFSFHDEDLLEAPFDHIRLFESQLFPVCASDEHGEALFNLAQPHFPLLNYSRNSYMGRLINRTLTRHSELSFSTFFVSSMSELLKQVALDGCGIAWLPEYAIQQEIRSGKLVVLNRDELVIPIQAYAYRMNTRMNPVAERFWRELRELEIVLS</sequence>
<proteinExistence type="evidence at protein level"/>
<keyword id="KW-0238">DNA-binding</keyword>
<keyword id="KW-1185">Reference proteome</keyword>
<keyword id="KW-0804">Transcription</keyword>
<keyword id="KW-0805">Transcription regulation</keyword>
<accession>P39376</accession>
<accession>Q2M5Y6</accession>
<dbReference type="EMBL" id="U14003">
    <property type="protein sequence ID" value="AAA97223.1"/>
    <property type="molecule type" value="Genomic_DNA"/>
</dbReference>
<dbReference type="EMBL" id="U00096">
    <property type="protein sequence ID" value="AAC77283.1"/>
    <property type="molecule type" value="Genomic_DNA"/>
</dbReference>
<dbReference type="EMBL" id="AP009048">
    <property type="protein sequence ID" value="BAE78320.1"/>
    <property type="molecule type" value="Genomic_DNA"/>
</dbReference>
<dbReference type="EMBL" id="U15029">
    <property type="protein sequence ID" value="AAC43300.1"/>
    <property type="molecule type" value="Genomic_DNA"/>
</dbReference>
<dbReference type="PIR" id="S56552">
    <property type="entry name" value="S56552"/>
</dbReference>
<dbReference type="RefSeq" id="NP_418747.1">
    <property type="nucleotide sequence ID" value="NC_000913.3"/>
</dbReference>
<dbReference type="RefSeq" id="WP_000340740.1">
    <property type="nucleotide sequence ID" value="NZ_STEB01000025.1"/>
</dbReference>
<dbReference type="SMR" id="P39376"/>
<dbReference type="BioGRID" id="4261004">
    <property type="interactions" value="123"/>
</dbReference>
<dbReference type="DIP" id="DIP-12633N"/>
<dbReference type="FunCoup" id="P39376">
    <property type="interactions" value="63"/>
</dbReference>
<dbReference type="IntAct" id="P39376">
    <property type="interactions" value="3"/>
</dbReference>
<dbReference type="STRING" id="511145.b4327"/>
<dbReference type="jPOST" id="P39376"/>
<dbReference type="PaxDb" id="511145-b4327"/>
<dbReference type="DNASU" id="948852"/>
<dbReference type="EnsemblBacteria" id="AAC77283">
    <property type="protein sequence ID" value="AAC77283"/>
    <property type="gene ID" value="b4327"/>
</dbReference>
<dbReference type="GeneID" id="75202992"/>
<dbReference type="GeneID" id="948852"/>
<dbReference type="KEGG" id="ecj:JW4290"/>
<dbReference type="KEGG" id="eco:b4327"/>
<dbReference type="KEGG" id="ecoc:C3026_23390"/>
<dbReference type="PATRIC" id="fig|511145.12.peg.4471"/>
<dbReference type="EchoBASE" id="EB2454"/>
<dbReference type="eggNOG" id="COG0583">
    <property type="taxonomic scope" value="Bacteria"/>
</dbReference>
<dbReference type="HOGENOM" id="CLU_039613_4_1_6"/>
<dbReference type="InParanoid" id="P39376"/>
<dbReference type="OMA" id="QMDAEIF"/>
<dbReference type="OrthoDB" id="6971749at2"/>
<dbReference type="PhylomeDB" id="P39376"/>
<dbReference type="BioCyc" id="EcoCyc:G7924-MONOMER"/>
<dbReference type="PRO" id="PR:P39376"/>
<dbReference type="Proteomes" id="UP000000625">
    <property type="component" value="Chromosome"/>
</dbReference>
<dbReference type="GO" id="GO:0003700">
    <property type="term" value="F:DNA-binding transcription factor activity"/>
    <property type="evidence" value="ECO:0007669"/>
    <property type="project" value="InterPro"/>
</dbReference>
<dbReference type="GO" id="GO:0042802">
    <property type="term" value="F:identical protein binding"/>
    <property type="evidence" value="ECO:0000314"/>
    <property type="project" value="EcoCyc"/>
</dbReference>
<dbReference type="GO" id="GO:0000976">
    <property type="term" value="F:transcription cis-regulatory region binding"/>
    <property type="evidence" value="ECO:0000314"/>
    <property type="project" value="EcoCyc"/>
</dbReference>
<dbReference type="GO" id="GO:0006355">
    <property type="term" value="P:regulation of DNA-templated transcription"/>
    <property type="evidence" value="ECO:0000314"/>
    <property type="project" value="EcoCyc"/>
</dbReference>
<dbReference type="CDD" id="cd05466">
    <property type="entry name" value="PBP2_LTTR_substrate"/>
    <property type="match status" value="1"/>
</dbReference>
<dbReference type="Gene3D" id="3.40.190.290">
    <property type="match status" value="1"/>
</dbReference>
<dbReference type="Gene3D" id="1.10.10.10">
    <property type="entry name" value="Winged helix-like DNA-binding domain superfamily/Winged helix DNA-binding domain"/>
    <property type="match status" value="1"/>
</dbReference>
<dbReference type="InterPro" id="IPR005119">
    <property type="entry name" value="LysR_subst-bd"/>
</dbReference>
<dbReference type="InterPro" id="IPR000847">
    <property type="entry name" value="Tscrpt_reg_HTH_LysR"/>
</dbReference>
<dbReference type="InterPro" id="IPR036388">
    <property type="entry name" value="WH-like_DNA-bd_sf"/>
</dbReference>
<dbReference type="InterPro" id="IPR036390">
    <property type="entry name" value="WH_DNA-bd_sf"/>
</dbReference>
<dbReference type="NCBIfam" id="NF007488">
    <property type="entry name" value="PRK10082.1"/>
    <property type="match status" value="1"/>
</dbReference>
<dbReference type="PANTHER" id="PTHR30126">
    <property type="entry name" value="HTH-TYPE TRANSCRIPTIONAL REGULATOR"/>
    <property type="match status" value="1"/>
</dbReference>
<dbReference type="PANTHER" id="PTHR30126:SF2">
    <property type="entry name" value="HTH-TYPE TRANSCRIPTIONAL REGULATOR YJIE"/>
    <property type="match status" value="1"/>
</dbReference>
<dbReference type="Pfam" id="PF00126">
    <property type="entry name" value="HTH_1"/>
    <property type="match status" value="1"/>
</dbReference>
<dbReference type="Pfam" id="PF03466">
    <property type="entry name" value="LysR_substrate"/>
    <property type="match status" value="1"/>
</dbReference>
<dbReference type="PRINTS" id="PR00039">
    <property type="entry name" value="HTHLYSR"/>
</dbReference>
<dbReference type="SUPFAM" id="SSF53850">
    <property type="entry name" value="Periplasmic binding protein-like II"/>
    <property type="match status" value="1"/>
</dbReference>
<dbReference type="SUPFAM" id="SSF46785">
    <property type="entry name" value="Winged helix' DNA-binding domain"/>
    <property type="match status" value="1"/>
</dbReference>
<dbReference type="PROSITE" id="PS50931">
    <property type="entry name" value="HTH_LYSR"/>
    <property type="match status" value="1"/>
</dbReference>
<comment type="function">
    <text evidence="3">Protects cells from HOCl (hypochlorite) stress but not peroxide or diamide stress. Decreases the intracellular load of reactive oxygen species by up-regulating genes involved in methionine and cysteine biosynthesis and down-regulating Fur-regulated genes involved in iron acquisition. Has also been suggested to down-regulate expression of the flagellar regulon, decreasing motility, but this activity was not confirmed in a second study (PubMed:22223481).</text>
</comment>
<comment type="subunit">
    <text evidence="3">Forms dimers, tetramers and possibly dodecameric complexes; oligomerization may be governed by cellular concentrations. DNA-binding seems to decrease oligomerization.</text>
</comment>
<comment type="induction">
    <text evidence="2 3">Transcription increases throughout growth and is maximal during stationary phase. Is not up-regulated upon exposure to HOCl.</text>
</comment>
<comment type="disruption phenotype">
    <text evidence="2 3">Controversial. Hypermotility, up-regulation of flagellar genes and up-regulation of flagellar protein FliC (PubMed:20494990). Decreased viability following HOCl stress; no effect on motility was seen in this study (PubMed:22223481).</text>
</comment>
<comment type="similarity">
    <text evidence="4">Belongs to the LysR transcriptional regulatory family.</text>
</comment>
<reference key="1">
    <citation type="journal article" date="1995" name="Nucleic Acids Res.">
        <title>Analysis of the Escherichia coli genome VI: DNA sequence of the region from 92.8 through 100 minutes.</title>
        <authorList>
            <person name="Burland V.D."/>
            <person name="Plunkett G. III"/>
            <person name="Sofia H.J."/>
            <person name="Daniels D.L."/>
            <person name="Blattner F.R."/>
        </authorList>
    </citation>
    <scope>NUCLEOTIDE SEQUENCE [LARGE SCALE GENOMIC DNA]</scope>
    <source>
        <strain>K12 / MG1655 / ATCC 47076</strain>
    </source>
</reference>
<reference key="2">
    <citation type="journal article" date="1997" name="Science">
        <title>The complete genome sequence of Escherichia coli K-12.</title>
        <authorList>
            <person name="Blattner F.R."/>
            <person name="Plunkett G. III"/>
            <person name="Bloch C.A."/>
            <person name="Perna N.T."/>
            <person name="Burland V."/>
            <person name="Riley M."/>
            <person name="Collado-Vides J."/>
            <person name="Glasner J.D."/>
            <person name="Rode C.K."/>
            <person name="Mayhew G.F."/>
            <person name="Gregor J."/>
            <person name="Davis N.W."/>
            <person name="Kirkpatrick H.A."/>
            <person name="Goeden M.A."/>
            <person name="Rose D.J."/>
            <person name="Mau B."/>
            <person name="Shao Y."/>
        </authorList>
    </citation>
    <scope>NUCLEOTIDE SEQUENCE [LARGE SCALE GENOMIC DNA]</scope>
    <source>
        <strain>K12 / MG1655 / ATCC 47076</strain>
    </source>
</reference>
<reference key="3">
    <citation type="journal article" date="2006" name="Mol. Syst. Biol.">
        <title>Highly accurate genome sequences of Escherichia coli K-12 strains MG1655 and W3110.</title>
        <authorList>
            <person name="Hayashi K."/>
            <person name="Morooka N."/>
            <person name="Yamamoto Y."/>
            <person name="Fujita K."/>
            <person name="Isono K."/>
            <person name="Choi S."/>
            <person name="Ohtsubo E."/>
            <person name="Baba T."/>
            <person name="Wanner B.L."/>
            <person name="Mori H."/>
            <person name="Horiuchi T."/>
        </authorList>
    </citation>
    <scope>NUCLEOTIDE SEQUENCE [LARGE SCALE GENOMIC DNA]</scope>
    <source>
        <strain>K12 / W3110 / ATCC 27325 / DSM 5911</strain>
    </source>
</reference>
<reference key="4">
    <citation type="journal article" date="1995" name="J. Biol. Chem.">
        <title>Purification and characterization of an isoaspartyl dipeptidase from Escherichia coli.</title>
        <authorList>
            <person name="Gary J.D."/>
            <person name="Clarke S."/>
        </authorList>
    </citation>
    <scope>NUCLEOTIDE SEQUENCE [GENOMIC DNA] OF 1-117</scope>
    <source>
        <strain>K12 / W3110 / ATCC 27325 / DSM 5911</strain>
    </source>
</reference>
<reference key="5">
    <citation type="journal article" date="2010" name="J. Bacteriol.">
        <title>The LysR-type transcriptional regulator QseD alters type three secretion in enterohemorrhagic Escherichia coli and motility in K-12 Escherichia coli.</title>
        <authorList>
            <person name="Habdas B.J."/>
            <person name="Smart J."/>
            <person name="Kaper J.B."/>
            <person name="Sperandio V."/>
        </authorList>
    </citation>
    <scope>POSSIBLE ROLE IN REGULATION OF MOTILITY</scope>
    <scope>DNA-BINDING</scope>
    <scope>INDUCTION</scope>
    <scope>DISRUPTION PHENOTYPE</scope>
    <source>
        <strain>K12 / BW25113</strain>
    </source>
</reference>
<reference key="6">
    <citation type="journal article" date="2012" name="J. Biol. Chem.">
        <title>Identification of a hypochlorite-specific transcription factor from Escherichia coli.</title>
        <authorList>
            <person name="Gebendorfer K.M."/>
            <person name="Drazic A."/>
            <person name="Le Y."/>
            <person name="Gundlach J."/>
            <person name="Bepperling A."/>
            <person name="Kastenmuller A."/>
            <person name="Ganzinger K.A."/>
            <person name="Braun N."/>
            <person name="Franzmann T.M."/>
            <person name="Winter J."/>
        </authorList>
    </citation>
    <scope>ROLE IN HYPOCHLORITE RESPONSE</scope>
    <scope>SUBUNIT</scope>
    <scope>DNA-BINDING</scope>
    <scope>INDUCTION</scope>
    <scope>DISRUPTION PHENOTYPE</scope>
    <source>
        <strain>K12 / C600 / CR34 / ATCC 23724 / DSM 3925 / LMG 3041 / NCIB 10222</strain>
    </source>
</reference>
<protein>
    <recommendedName>
        <fullName>HTH-type transcriptional regulator YjiE</fullName>
    </recommendedName>
    <alternativeName>
        <fullName>Hypochlorite-response regulator protein YjiE</fullName>
    </alternativeName>
    <alternativeName>
        <fullName>Quorum-sensing regulator protein D</fullName>
    </alternativeName>
</protein>
<feature type="chain" id="PRO_0000105807" description="HTH-type transcriptional regulator YjiE">
    <location>
        <begin position="1"/>
        <end position="303"/>
    </location>
</feature>
<feature type="domain" description="HTH lysR-type" evidence="1">
    <location>
        <begin position="11"/>
        <end position="68"/>
    </location>
</feature>
<feature type="DNA-binding region" description="H-T-H motif" evidence="1">
    <location>
        <begin position="28"/>
        <end position="47"/>
    </location>
</feature>
<gene>
    <name type="primary">yjiE</name>
    <name type="synonym">qseD</name>
    <name type="ordered locus">b4327</name>
    <name type="ordered locus">JW4290</name>
</gene>
<evidence type="ECO:0000255" key="1">
    <source>
        <dbReference type="PROSITE-ProRule" id="PRU00253"/>
    </source>
</evidence>
<evidence type="ECO:0000269" key="2">
    <source>
    </source>
</evidence>
<evidence type="ECO:0000269" key="3">
    <source>
    </source>
</evidence>
<evidence type="ECO:0000305" key="4"/>
<name>YJIE_ECOLI</name>